<accession>B1L969</accession>
<dbReference type="EC" id="4.2.2.22"/>
<dbReference type="EMBL" id="CP000969">
    <property type="protein sequence ID" value="ACB08867.1"/>
    <property type="molecule type" value="Genomic_DNA"/>
</dbReference>
<dbReference type="SMR" id="B1L969"/>
<dbReference type="CAZy" id="PL1">
    <property type="family name" value="Polysaccharide Lyase Family 1"/>
</dbReference>
<dbReference type="KEGG" id="trq:TRQ2_0511"/>
<dbReference type="HOGENOM" id="CLU_021894_2_0_0"/>
<dbReference type="Proteomes" id="UP000001687">
    <property type="component" value="Chromosome"/>
</dbReference>
<dbReference type="GO" id="GO:0005576">
    <property type="term" value="C:extracellular region"/>
    <property type="evidence" value="ECO:0007669"/>
    <property type="project" value="UniProtKB-SubCell"/>
</dbReference>
<dbReference type="GO" id="GO:0046872">
    <property type="term" value="F:metal ion binding"/>
    <property type="evidence" value="ECO:0007669"/>
    <property type="project" value="UniProtKB-KW"/>
</dbReference>
<dbReference type="GO" id="GO:0030570">
    <property type="term" value="F:pectate lyase activity"/>
    <property type="evidence" value="ECO:0007669"/>
    <property type="project" value="InterPro"/>
</dbReference>
<dbReference type="GO" id="GO:0071555">
    <property type="term" value="P:cell wall organization"/>
    <property type="evidence" value="ECO:0007669"/>
    <property type="project" value="UniProtKB-KW"/>
</dbReference>
<dbReference type="GO" id="GO:0000272">
    <property type="term" value="P:polysaccharide catabolic process"/>
    <property type="evidence" value="ECO:0007669"/>
    <property type="project" value="UniProtKB-KW"/>
</dbReference>
<dbReference type="Gene3D" id="2.160.20.10">
    <property type="entry name" value="Single-stranded right-handed beta-helix, Pectin lyase-like"/>
    <property type="match status" value="1"/>
</dbReference>
<dbReference type="InterPro" id="IPR002022">
    <property type="entry name" value="Pec_lyase"/>
</dbReference>
<dbReference type="InterPro" id="IPR012334">
    <property type="entry name" value="Pectin_lyas_fold"/>
</dbReference>
<dbReference type="InterPro" id="IPR011050">
    <property type="entry name" value="Pectin_lyase_fold/virulence"/>
</dbReference>
<dbReference type="InterPro" id="IPR045032">
    <property type="entry name" value="PEL"/>
</dbReference>
<dbReference type="PANTHER" id="PTHR31683">
    <property type="entry name" value="PECTATE LYASE 18-RELATED"/>
    <property type="match status" value="1"/>
</dbReference>
<dbReference type="PANTHER" id="PTHR31683:SF18">
    <property type="entry name" value="PECTATE LYASE 21-RELATED"/>
    <property type="match status" value="1"/>
</dbReference>
<dbReference type="Pfam" id="PF00544">
    <property type="entry name" value="Pectate_lyase_4"/>
    <property type="match status" value="1"/>
</dbReference>
<dbReference type="SMART" id="SM00656">
    <property type="entry name" value="Amb_all"/>
    <property type="match status" value="1"/>
</dbReference>
<dbReference type="SUPFAM" id="SSF51126">
    <property type="entry name" value="Pectin lyase-like"/>
    <property type="match status" value="1"/>
</dbReference>
<feature type="signal peptide" evidence="3">
    <location>
        <begin position="1"/>
        <end position="25"/>
    </location>
</feature>
<feature type="chain" id="PRO_0000405017" description="Pectate trisaccharide-lyase" evidence="3">
    <location>
        <begin position="26"/>
        <end position="365"/>
    </location>
</feature>
<feature type="repeat" description="PbH1 1" evidence="3">
    <location>
        <begin position="149"/>
        <end position="171"/>
    </location>
</feature>
<feature type="repeat" description="PbH1 2" evidence="3">
    <location>
        <begin position="261"/>
        <end position="287"/>
    </location>
</feature>
<feature type="active site" evidence="1">
    <location>
        <position position="222"/>
    </location>
</feature>
<feature type="binding site" evidence="1">
    <location>
        <position position="142"/>
    </location>
    <ligand>
        <name>Ca(2+)</name>
        <dbReference type="ChEBI" id="CHEBI:29108"/>
    </ligand>
</feature>
<feature type="binding site" evidence="1">
    <location>
        <position position="164"/>
    </location>
    <ligand>
        <name>Ca(2+)</name>
        <dbReference type="ChEBI" id="CHEBI:29108"/>
    </ligand>
</feature>
<feature type="binding site" evidence="1">
    <location>
        <position position="168"/>
    </location>
    <ligand>
        <name>Ca(2+)</name>
        <dbReference type="ChEBI" id="CHEBI:29108"/>
    </ligand>
</feature>
<comment type="function">
    <text evidence="2">Cleaves unsaturated trigalacturonate from pectin. Activity is highest towards polygalacturonic acid, activity on methylated pectins decreases with an increasing degree of methylation (By similarity).</text>
</comment>
<comment type="catalytic activity">
    <reaction evidence="2">
        <text>eliminative cleavage of unsaturated trigalacturonate as the major product from the reducing end of polygalacturonic acid/pectate.</text>
        <dbReference type="EC" id="4.2.2.22"/>
    </reaction>
</comment>
<comment type="cofactor">
    <cofactor evidence="2">
        <name>Ca(2+)</name>
        <dbReference type="ChEBI" id="CHEBI:29108"/>
    </cofactor>
</comment>
<comment type="subunit">
    <text evidence="2">Homotetramer.</text>
</comment>
<comment type="subcellular location">
    <subcellularLocation>
        <location evidence="2">Secreted</location>
    </subcellularLocation>
</comment>
<comment type="similarity">
    <text evidence="3">Belongs to the polysaccharide lyase 1 family.</text>
</comment>
<gene>
    <name evidence="2" type="primary">pelA</name>
    <name type="ordered locus">TRQ2_0511</name>
</gene>
<organism>
    <name type="scientific">Thermotoga sp. (strain RQ2)</name>
    <dbReference type="NCBI Taxonomy" id="126740"/>
    <lineage>
        <taxon>Bacteria</taxon>
        <taxon>Thermotogati</taxon>
        <taxon>Thermotogota</taxon>
        <taxon>Thermotogae</taxon>
        <taxon>Thermotogales</taxon>
        <taxon>Thermotogaceae</taxon>
        <taxon>Thermotoga</taxon>
    </lineage>
</organism>
<name>PTLY_THESQ</name>
<reference evidence="4" key="1">
    <citation type="journal article" date="2011" name="J. Bacteriol.">
        <title>Genome sequence of Thermotoga sp. strain RQ2, a hyperthermophilic bacterium isolated from a geothermally heated region of the seafloor near Ribeira Quente, the Azores.</title>
        <authorList>
            <person name="Swithers K.S."/>
            <person name="DiPippo J.L."/>
            <person name="Bruce D.C."/>
            <person name="Detter C."/>
            <person name="Tapia R."/>
            <person name="Han S."/>
            <person name="Saunders E."/>
            <person name="Goodwin L.A."/>
            <person name="Han J."/>
            <person name="Woyke T."/>
            <person name="Pitluck S."/>
            <person name="Pennacchio L."/>
            <person name="Nolan M."/>
            <person name="Mikhailova N."/>
            <person name="Lykidis A."/>
            <person name="Land M.L."/>
            <person name="Brettin T."/>
            <person name="Stetter K.O."/>
            <person name="Nelson K.E."/>
            <person name="Gogarten J.P."/>
            <person name="Noll K.M."/>
        </authorList>
    </citation>
    <scope>NUCLEOTIDE SEQUENCE [LARGE SCALE GENOMIC DNA]</scope>
    <source>
        <strain>RQ2</strain>
    </source>
</reference>
<protein>
    <recommendedName>
        <fullName evidence="2">Pectate trisaccharide-lyase</fullName>
        <ecNumber>4.2.2.22</ecNumber>
    </recommendedName>
    <alternativeName>
        <fullName evidence="2">Pectate lyase A</fullName>
        <shortName evidence="2">PelA</shortName>
    </alternativeName>
</protein>
<sequence length="365" mass="40315">MRFSRVVSLVLLLVFTAVLTGAVKASLNDKPVGFASVPTADLPEGTVGGLGGEIVFVRTAEELEKYTTAEGKYVIVVDGTIVFEPKREIKVLSDKTIVGINDAKIVGGGLVIKDAQNVIIRNIHFEGFYMEDDPQGKKYDFDYINAENSHHIWIDHCTFVNGNDGAVDIKKYSNYITVSWCKFVDHDKVSLVGSSDKEDPEQAGQAYKVTYHHNYFKNCIQRMPRIRFGMAHVFNNFYSMGLRTGVSGNVFPIYGVASAMGAKVHVEGNYFMGYGAVMAEAGIAFLPTRIMGPVEGYLTLGEGDAKNKFYYCKEPETRPVEEGKPAFDPHEYYDYTLDPVDDVPKIVVDGAGAGKLVFEDLMSSK</sequence>
<keyword id="KW-0106">Calcium</keyword>
<keyword id="KW-0119">Carbohydrate metabolism</keyword>
<keyword id="KW-0961">Cell wall biogenesis/degradation</keyword>
<keyword id="KW-0456">Lyase</keyword>
<keyword id="KW-0479">Metal-binding</keyword>
<keyword id="KW-0624">Polysaccharide degradation</keyword>
<keyword id="KW-0677">Repeat</keyword>
<keyword id="KW-0964">Secreted</keyword>
<keyword id="KW-0732">Signal</keyword>
<evidence type="ECO:0000250" key="1">
    <source>
        <dbReference type="UniProtKB" id="P39116"/>
    </source>
</evidence>
<evidence type="ECO:0000250" key="2">
    <source>
        <dbReference type="UniProtKB" id="Q9WYR4"/>
    </source>
</evidence>
<evidence type="ECO:0000255" key="3"/>
<evidence type="ECO:0000312" key="4">
    <source>
        <dbReference type="EMBL" id="ACB08867.1"/>
    </source>
</evidence>
<proteinExistence type="inferred from homology"/>